<comment type="function">
    <text>Plays an important role in the elongation step of protein synthesis.</text>
</comment>
<comment type="subunit">
    <text>P1 and P2 exist as dimers at the large ribosomal subunit.</text>
</comment>
<comment type="allergen">
    <text>Causes an allergic reaction in human.</text>
</comment>
<comment type="similarity">
    <text evidence="3">Belongs to the eukaryotic ribosomal protein P1/P2 family.</text>
</comment>
<gene>
    <name type="ORF">AFUA_2G10100</name>
</gene>
<sequence length="111" mass="11141">MKHLAAYLLLALAGNTSPSSEDVKAVLSSVGIDADEERLNKLIAELEGKDLQELIAEGSTKLASVPSGGAAAAAPAAAGAAAGGAAAPAAEEKKEEEKEESDEDMGFGLFD</sequence>
<organism>
    <name type="scientific">Aspergillus fumigatus (strain ATCC MYA-4609 / CBS 101355 / FGSC A1100 / Af293)</name>
    <name type="common">Neosartorya fumigata</name>
    <dbReference type="NCBI Taxonomy" id="330879"/>
    <lineage>
        <taxon>Eukaryota</taxon>
        <taxon>Fungi</taxon>
        <taxon>Dikarya</taxon>
        <taxon>Ascomycota</taxon>
        <taxon>Pezizomycotina</taxon>
        <taxon>Eurotiomycetes</taxon>
        <taxon>Eurotiomycetidae</taxon>
        <taxon>Eurotiales</taxon>
        <taxon>Aspergillaceae</taxon>
        <taxon>Aspergillus</taxon>
        <taxon>Aspergillus subgen. Fumigati</taxon>
    </lineage>
</organism>
<reference key="1">
    <citation type="submission" date="2000-01" db="EMBL/GenBank/DDBJ databases">
        <title>Highly conserved ribosomal proteins binding to serum IgE of Aspergillus fumigatus sensitized individuals.</title>
        <authorList>
            <person name="Hemmann S."/>
            <person name="Crameri R."/>
        </authorList>
    </citation>
    <scope>NUCLEOTIDE SEQUENCE [MRNA]</scope>
    <source>
        <strain>ATCC 42202 / AF-102 / Ag 507</strain>
    </source>
</reference>
<reference key="2">
    <citation type="journal article" date="2002" name="Mol. Microbiol.">
        <title>Role of the ribosomal stalk components in the resistance of Aspergillus fumigatus to the sordarin antifungals.</title>
        <authorList>
            <person name="Santos C."/>
            <person name="Ballesta J.P.G."/>
        </authorList>
    </citation>
    <scope>NUCLEOTIDE SEQUENCE [GENOMIC DNA]</scope>
</reference>
<reference key="3">
    <citation type="journal article" date="2005" name="Nature">
        <title>Genomic sequence of the pathogenic and allergenic filamentous fungus Aspergillus fumigatus.</title>
        <authorList>
            <person name="Nierman W.C."/>
            <person name="Pain A."/>
            <person name="Anderson M.J."/>
            <person name="Wortman J.R."/>
            <person name="Kim H.S."/>
            <person name="Arroyo J."/>
            <person name="Berriman M."/>
            <person name="Abe K."/>
            <person name="Archer D.B."/>
            <person name="Bermejo C."/>
            <person name="Bennett J.W."/>
            <person name="Bowyer P."/>
            <person name="Chen D."/>
            <person name="Collins M."/>
            <person name="Coulsen R."/>
            <person name="Davies R."/>
            <person name="Dyer P.S."/>
            <person name="Farman M.L."/>
            <person name="Fedorova N."/>
            <person name="Fedorova N.D."/>
            <person name="Feldblyum T.V."/>
            <person name="Fischer R."/>
            <person name="Fosker N."/>
            <person name="Fraser A."/>
            <person name="Garcia J.L."/>
            <person name="Garcia M.J."/>
            <person name="Goble A."/>
            <person name="Goldman G.H."/>
            <person name="Gomi K."/>
            <person name="Griffith-Jones S."/>
            <person name="Gwilliam R."/>
            <person name="Haas B.J."/>
            <person name="Haas H."/>
            <person name="Harris D.E."/>
            <person name="Horiuchi H."/>
            <person name="Huang J."/>
            <person name="Humphray S."/>
            <person name="Jimenez J."/>
            <person name="Keller N."/>
            <person name="Khouri H."/>
            <person name="Kitamoto K."/>
            <person name="Kobayashi T."/>
            <person name="Konzack S."/>
            <person name="Kulkarni R."/>
            <person name="Kumagai T."/>
            <person name="Lafton A."/>
            <person name="Latge J.-P."/>
            <person name="Li W."/>
            <person name="Lord A."/>
            <person name="Lu C."/>
            <person name="Majoros W.H."/>
            <person name="May G.S."/>
            <person name="Miller B.L."/>
            <person name="Mohamoud Y."/>
            <person name="Molina M."/>
            <person name="Monod M."/>
            <person name="Mouyna I."/>
            <person name="Mulligan S."/>
            <person name="Murphy L.D."/>
            <person name="O'Neil S."/>
            <person name="Paulsen I."/>
            <person name="Penalva M.A."/>
            <person name="Pertea M."/>
            <person name="Price C."/>
            <person name="Pritchard B.L."/>
            <person name="Quail M.A."/>
            <person name="Rabbinowitsch E."/>
            <person name="Rawlins N."/>
            <person name="Rajandream M.A."/>
            <person name="Reichard U."/>
            <person name="Renauld H."/>
            <person name="Robson G.D."/>
            <person name="Rodriguez de Cordoba S."/>
            <person name="Rodriguez-Pena J.M."/>
            <person name="Ronning C.M."/>
            <person name="Rutter S."/>
            <person name="Salzberg S.L."/>
            <person name="Sanchez M."/>
            <person name="Sanchez-Ferrero J.C."/>
            <person name="Saunders D."/>
            <person name="Seeger K."/>
            <person name="Squares R."/>
            <person name="Squares S."/>
            <person name="Takeuchi M."/>
            <person name="Tekaia F."/>
            <person name="Turner G."/>
            <person name="Vazquez de Aldana C.R."/>
            <person name="Weidman J."/>
            <person name="White O."/>
            <person name="Woodward J.R."/>
            <person name="Yu J.-H."/>
            <person name="Fraser C.M."/>
            <person name="Galagan J.E."/>
            <person name="Asai K."/>
            <person name="Machida M."/>
            <person name="Hall N."/>
            <person name="Barrell B.G."/>
            <person name="Denning D.W."/>
        </authorList>
    </citation>
    <scope>NUCLEOTIDE SEQUENCE [LARGE SCALE GENOMIC DNA]</scope>
    <source>
        <strain>ATCC MYA-4609 / CBS 101355 / FGSC A1100 / Af293</strain>
    </source>
</reference>
<proteinExistence type="evidence at protein level"/>
<dbReference type="EMBL" id="AJ224333">
    <property type="protein sequence ID" value="CAB64688.1"/>
    <property type="molecule type" value="mRNA"/>
</dbReference>
<dbReference type="EMBL" id="AF268870">
    <property type="protein sequence ID" value="AAG01801.1"/>
    <property type="molecule type" value="Genomic_DNA"/>
</dbReference>
<dbReference type="EMBL" id="AAHF01000001">
    <property type="protein sequence ID" value="EAL93305.1"/>
    <property type="molecule type" value="Genomic_DNA"/>
</dbReference>
<dbReference type="RefSeq" id="XP_755343.1">
    <property type="nucleotide sequence ID" value="XM_750250.1"/>
</dbReference>
<dbReference type="SMR" id="Q9UUZ6"/>
<dbReference type="FunCoup" id="Q9UUZ6">
    <property type="interactions" value="922"/>
</dbReference>
<dbReference type="STRING" id="330879.Q9UUZ6"/>
<dbReference type="Allergome" id="3126">
    <property type="allergen name" value="Asp f 8.0101"/>
</dbReference>
<dbReference type="Allergome" id="78">
    <property type="allergen name" value="Asp f 8"/>
</dbReference>
<dbReference type="EnsemblFungi" id="EAL93305">
    <property type="protein sequence ID" value="EAL93305"/>
    <property type="gene ID" value="AFUA_2G10100"/>
</dbReference>
<dbReference type="GeneID" id="3512932"/>
<dbReference type="KEGG" id="afm:AFUA_2G10100"/>
<dbReference type="VEuPathDB" id="FungiDB:Afu2g10100"/>
<dbReference type="eggNOG" id="KOG3449">
    <property type="taxonomic scope" value="Eukaryota"/>
</dbReference>
<dbReference type="HOGENOM" id="CLU_114656_0_2_1"/>
<dbReference type="InParanoid" id="Q9UUZ6"/>
<dbReference type="OMA" id="MKVIASY"/>
<dbReference type="OrthoDB" id="1227494at2759"/>
<dbReference type="Proteomes" id="UP000002530">
    <property type="component" value="Chromosome 2"/>
</dbReference>
<dbReference type="GO" id="GO:0022625">
    <property type="term" value="C:cytosolic large ribosomal subunit"/>
    <property type="evidence" value="ECO:0007669"/>
    <property type="project" value="InterPro"/>
</dbReference>
<dbReference type="GO" id="GO:0003735">
    <property type="term" value="F:structural constituent of ribosome"/>
    <property type="evidence" value="ECO:0007669"/>
    <property type="project" value="InterPro"/>
</dbReference>
<dbReference type="GO" id="GO:0002182">
    <property type="term" value="P:cytoplasmic translational elongation"/>
    <property type="evidence" value="ECO:0007669"/>
    <property type="project" value="InterPro"/>
</dbReference>
<dbReference type="CDD" id="cd05833">
    <property type="entry name" value="Ribosomal_P2"/>
    <property type="match status" value="1"/>
</dbReference>
<dbReference type="FunFam" id="1.10.10.1410:FF:000002">
    <property type="entry name" value="60S acidic ribosomal protein P2"/>
    <property type="match status" value="1"/>
</dbReference>
<dbReference type="Gene3D" id="1.10.10.1410">
    <property type="match status" value="1"/>
</dbReference>
<dbReference type="HAMAP" id="MF_01478">
    <property type="entry name" value="Ribosomal_L12_arch"/>
    <property type="match status" value="1"/>
</dbReference>
<dbReference type="InterPro" id="IPR038716">
    <property type="entry name" value="P1/P2_N_sf"/>
</dbReference>
<dbReference type="InterPro" id="IPR027534">
    <property type="entry name" value="Ribosomal_P1/P2"/>
</dbReference>
<dbReference type="InterPro" id="IPR001859">
    <property type="entry name" value="Ribosomal_P1/P2_euk"/>
</dbReference>
<dbReference type="InterPro" id="IPR044076">
    <property type="entry name" value="Ribosomal_P2"/>
</dbReference>
<dbReference type="PANTHER" id="PTHR21141">
    <property type="entry name" value="60S ACIDIC RIBOSOMAL PROTEIN FAMILY MEMBER"/>
    <property type="match status" value="1"/>
</dbReference>
<dbReference type="PANTHER" id="PTHR21141:SF5">
    <property type="entry name" value="LARGE RIBOSOMAL SUBUNIT PROTEIN P2"/>
    <property type="match status" value="1"/>
</dbReference>
<dbReference type="Pfam" id="PF00428">
    <property type="entry name" value="Ribosomal_60s"/>
    <property type="match status" value="1"/>
</dbReference>
<dbReference type="PRINTS" id="PR00456">
    <property type="entry name" value="RIBOSOMALP2"/>
</dbReference>
<protein>
    <recommendedName>
        <fullName evidence="3">Large ribosomal subunit protein P2</fullName>
    </recommendedName>
    <alternativeName>
        <fullName>60S acidic ribosomal protein P2</fullName>
    </alternativeName>
    <alternativeName>
        <fullName>AfP2</fullName>
    </alternativeName>
    <allergenName>Asp f 8</allergenName>
</protein>
<evidence type="ECO:0000250" key="1"/>
<evidence type="ECO:0000256" key="2">
    <source>
        <dbReference type="SAM" id="MobiDB-lite"/>
    </source>
</evidence>
<evidence type="ECO:0000305" key="3"/>
<accession>Q9UUZ6</accession>
<accession>Q4X1G0</accession>
<accession>Q9HGU9</accession>
<keyword id="KW-0020">Allergen</keyword>
<keyword id="KW-0597">Phosphoprotein</keyword>
<keyword id="KW-1185">Reference proteome</keyword>
<keyword id="KW-0687">Ribonucleoprotein</keyword>
<keyword id="KW-0689">Ribosomal protein</keyword>
<name>RLA2_ASPFU</name>
<feature type="chain" id="PRO_0000157673" description="Large ribosomal subunit protein P2">
    <location>
        <begin position="1"/>
        <end position="111"/>
    </location>
</feature>
<feature type="region of interest" description="Disordered" evidence="2">
    <location>
        <begin position="81"/>
        <end position="111"/>
    </location>
</feature>
<feature type="modified residue" description="Phosphoserine" evidence="1">
    <location>
        <position position="101"/>
    </location>
</feature>
<feature type="sequence conflict" description="In Ref. 1; CAB64688." evidence="3" ref="1">
    <original>H</original>
    <variation>Y</variation>
    <location>
        <position position="3"/>
    </location>
</feature>
<feature type="sequence conflict" description="In Ref. 1; CAB64688." evidence="3" ref="1">
    <original>Y</original>
    <variation>F</variation>
    <location>
        <position position="7"/>
    </location>
</feature>
<feature type="sequence conflict" description="In Ref. 1; CAB64688." evidence="3" ref="1">
    <original>E</original>
    <variation>K</variation>
    <location>
        <position position="91"/>
    </location>
</feature>
<feature type="sequence conflict" description="In Ref. 1; CAB64688." evidence="3" ref="1">
    <original>K</original>
    <variation>N</variation>
    <location>
        <position position="94"/>
    </location>
</feature>